<keyword id="KW-0333">Golgi apparatus</keyword>
<keyword id="KW-0378">Hydrolase</keyword>
<keyword id="KW-1185">Reference proteome</keyword>
<feature type="chain" id="PRO_0000202859" description="2',3'-cyclic-nucleotide 3'-phosphodiesterase">
    <location>
        <begin position="1"/>
        <end position="239"/>
    </location>
</feature>
<feature type="active site" description="Proton donor/acceptor" evidence="1">
    <location>
        <position position="39"/>
    </location>
</feature>
<feature type="active site" description="Proton donor/acceptor" evidence="1">
    <location>
        <position position="150"/>
    </location>
</feature>
<feature type="mutagenesis site" description="Abolishes cyclic nucleotide phosphodiesterase activity." evidence="2">
    <original>H</original>
    <variation>A</variation>
    <location>
        <position position="39"/>
    </location>
</feature>
<feature type="mutagenesis site" description="Strongly reduces cyclic nucleotide phosphodiesterase activity." evidence="2">
    <original>T</original>
    <variation>A</variation>
    <location>
        <position position="41"/>
    </location>
</feature>
<feature type="mutagenesis site" description="Abolishes cyclic nucleotide phosphodiesterase activity." evidence="2">
    <original>H</original>
    <variation>A</variation>
    <location>
        <position position="150"/>
    </location>
</feature>
<feature type="mutagenesis site" description="Strongly reduces cyclic nucleotide phosphodiesterase activity." evidence="2">
    <original>S</original>
    <variation>A</variation>
    <location>
        <position position="152"/>
    </location>
</feature>
<reference key="1">
    <citation type="journal article" date="1997" name="Yeast">
        <title>Analysis of a 17.9 kb region from Saccharomyces cerevisiae chromosome VII reveals the presence of eight open reading frames, including BRF1 (TFIIIB70) and GCN5 genes.</title>
        <authorList>
            <person name="Feroli F."/>
            <person name="Carignani G."/>
            <person name="Pavanello A."/>
            <person name="Guerreiro P."/>
            <person name="Azevedo D."/>
            <person name="Rodrigues-Pousada C."/>
            <person name="Melchioretto P."/>
            <person name="Panzeri L."/>
            <person name="Agostoni Carbone M.L."/>
        </authorList>
    </citation>
    <scope>NUCLEOTIDE SEQUENCE [GENOMIC DNA]</scope>
    <source>
        <strain>ATCC 96604 / S288c / FY1679</strain>
    </source>
</reference>
<reference key="2">
    <citation type="journal article" date="1997" name="Nature">
        <title>The nucleotide sequence of Saccharomyces cerevisiae chromosome VII.</title>
        <authorList>
            <person name="Tettelin H."/>
            <person name="Agostoni-Carbone M.L."/>
            <person name="Albermann K."/>
            <person name="Albers M."/>
            <person name="Arroyo J."/>
            <person name="Backes U."/>
            <person name="Barreiros T."/>
            <person name="Bertani I."/>
            <person name="Bjourson A.J."/>
            <person name="Brueckner M."/>
            <person name="Bruschi C.V."/>
            <person name="Carignani G."/>
            <person name="Castagnoli L."/>
            <person name="Cerdan E."/>
            <person name="Clemente M.L."/>
            <person name="Coblenz A."/>
            <person name="Coglievina M."/>
            <person name="Coissac E."/>
            <person name="Defoor E."/>
            <person name="Del Bino S."/>
            <person name="Delius H."/>
            <person name="Delneri D."/>
            <person name="de Wergifosse P."/>
            <person name="Dujon B."/>
            <person name="Durand P."/>
            <person name="Entian K.-D."/>
            <person name="Eraso P."/>
            <person name="Escribano V."/>
            <person name="Fabiani L."/>
            <person name="Fartmann B."/>
            <person name="Feroli F."/>
            <person name="Feuermann M."/>
            <person name="Frontali L."/>
            <person name="Garcia-Gonzalez M."/>
            <person name="Garcia-Saez M.I."/>
            <person name="Goffeau A."/>
            <person name="Guerreiro P."/>
            <person name="Hani J."/>
            <person name="Hansen M."/>
            <person name="Hebling U."/>
            <person name="Hernandez K."/>
            <person name="Heumann K."/>
            <person name="Hilger F."/>
            <person name="Hofmann B."/>
            <person name="Indge K.J."/>
            <person name="James C.M."/>
            <person name="Klima R."/>
            <person name="Koetter P."/>
            <person name="Kramer B."/>
            <person name="Kramer W."/>
            <person name="Lauquin G."/>
            <person name="Leuther H."/>
            <person name="Louis E.J."/>
            <person name="Maillier E."/>
            <person name="Marconi A."/>
            <person name="Martegani E."/>
            <person name="Mazon M.J."/>
            <person name="Mazzoni C."/>
            <person name="McReynolds A.D.K."/>
            <person name="Melchioretto P."/>
            <person name="Mewes H.-W."/>
            <person name="Minenkova O."/>
            <person name="Mueller-Auer S."/>
            <person name="Nawrocki A."/>
            <person name="Netter P."/>
            <person name="Neu R."/>
            <person name="Nombela C."/>
            <person name="Oliver S.G."/>
            <person name="Panzeri L."/>
            <person name="Paoluzi S."/>
            <person name="Plevani P."/>
            <person name="Portetelle D."/>
            <person name="Portillo F."/>
            <person name="Potier S."/>
            <person name="Purnelle B."/>
            <person name="Rieger M."/>
            <person name="Riles L."/>
            <person name="Rinaldi T."/>
            <person name="Robben J."/>
            <person name="Rodrigues-Pousada C."/>
            <person name="Rodriguez-Belmonte E."/>
            <person name="Rodriguez-Torres A.M."/>
            <person name="Rose M."/>
            <person name="Ruzzi M."/>
            <person name="Saliola M."/>
            <person name="Sanchez-Perez M."/>
            <person name="Schaefer B."/>
            <person name="Schaefer M."/>
            <person name="Scharfe M."/>
            <person name="Schmidheini T."/>
            <person name="Schreer A."/>
            <person name="Skala J."/>
            <person name="Souciet J.-L."/>
            <person name="Steensma H.Y."/>
            <person name="Talla E."/>
            <person name="Thierry A."/>
            <person name="Vandenbol M."/>
            <person name="van der Aart Q.J.M."/>
            <person name="Van Dyck L."/>
            <person name="Vanoni M."/>
            <person name="Verhasselt P."/>
            <person name="Voet M."/>
            <person name="Volckaert G."/>
            <person name="Wambutt R."/>
            <person name="Watson M.D."/>
            <person name="Weber N."/>
            <person name="Wedler E."/>
            <person name="Wedler H."/>
            <person name="Wipfli P."/>
            <person name="Wolf K."/>
            <person name="Wright L.F."/>
            <person name="Zaccaria P."/>
            <person name="Zimmermann M."/>
            <person name="Zollner A."/>
            <person name="Kleine K."/>
        </authorList>
    </citation>
    <scope>NUCLEOTIDE SEQUENCE [LARGE SCALE GENOMIC DNA]</scope>
    <source>
        <strain>ATCC 204508 / S288c</strain>
    </source>
</reference>
<reference key="3">
    <citation type="journal article" date="2014" name="G3 (Bethesda)">
        <title>The reference genome sequence of Saccharomyces cerevisiae: Then and now.</title>
        <authorList>
            <person name="Engel S.R."/>
            <person name="Dietrich F.S."/>
            <person name="Fisk D.G."/>
            <person name="Binkley G."/>
            <person name="Balakrishnan R."/>
            <person name="Costanzo M.C."/>
            <person name="Dwight S.S."/>
            <person name="Hitz B.C."/>
            <person name="Karra K."/>
            <person name="Nash R.S."/>
            <person name="Weng S."/>
            <person name="Wong E.D."/>
            <person name="Lloyd P."/>
            <person name="Skrzypek M.S."/>
            <person name="Miyasato S.R."/>
            <person name="Simison M."/>
            <person name="Cherry J.M."/>
        </authorList>
    </citation>
    <scope>GENOME REANNOTATION</scope>
    <source>
        <strain>ATCC 204508 / S288c</strain>
    </source>
</reference>
<reference key="4">
    <citation type="journal article" date="2007" name="Genome Res.">
        <title>Approaching a complete repository of sequence-verified protein-encoding clones for Saccharomyces cerevisiae.</title>
        <authorList>
            <person name="Hu Y."/>
            <person name="Rolfs A."/>
            <person name="Bhullar B."/>
            <person name="Murthy T.V.S."/>
            <person name="Zhu C."/>
            <person name="Berger M.F."/>
            <person name="Camargo A.A."/>
            <person name="Kelley F."/>
            <person name="McCarron S."/>
            <person name="Jepson D."/>
            <person name="Richardson A."/>
            <person name="Raphael J."/>
            <person name="Moreira D."/>
            <person name="Taycher E."/>
            <person name="Zuo D."/>
            <person name="Mohr S."/>
            <person name="Kane M.F."/>
            <person name="Williamson J."/>
            <person name="Simpson A.J.G."/>
            <person name="Bulyk M.L."/>
            <person name="Harlow E."/>
            <person name="Marsischky G."/>
            <person name="Kolodner R.D."/>
            <person name="LaBaer J."/>
        </authorList>
    </citation>
    <scope>NUCLEOTIDE SEQUENCE [GENOMIC DNA]</scope>
    <source>
        <strain>ATCC 204508 / S288c</strain>
    </source>
</reference>
<reference key="5">
    <citation type="journal article" date="1994" name="J. Biol. Chem.">
        <title>tRNA splicing in yeast and wheat germ. A cyclic phosphodiesterase implicated in the metabolism of ADP-ribose 1',2'-cyclic phosphate.</title>
        <authorList>
            <person name="Culver G.M."/>
            <person name="Consaul S.A."/>
            <person name="Tycowski K.T."/>
            <person name="Filipowicz W."/>
            <person name="Phizicky E.M."/>
        </authorList>
    </citation>
    <scope>FUNCTION</scope>
    <scope>CATALYTIC ACTIVITY</scope>
    <scope>BIOPHYSICOCHEMICAL PROPERTIES</scope>
</reference>
<reference key="6">
    <citation type="journal article" date="2000" name="Nucleic Acids Res.">
        <title>Characterization of the Saccharomyces cerevisiae cyclic nucleotide phosphodiesterase involved in the metabolism of ADP-ribose 1',2'-cyclic phosphate.</title>
        <authorList>
            <person name="Nasr F."/>
            <person name="Filipowicz W."/>
        </authorList>
    </citation>
    <scope>FUNCTION</scope>
    <scope>CATALYTIC ACTIVITY</scope>
    <scope>BIOPHYSICOCHEMICAL PROPERTIES</scope>
    <scope>MUTAGENESIS OF HIS-39; THR-41; HIS-150 AND SER-152</scope>
</reference>
<reference key="7">
    <citation type="journal article" date="2003" name="Nature">
        <title>Global analysis of protein localization in budding yeast.</title>
        <authorList>
            <person name="Huh W.-K."/>
            <person name="Falvo J.V."/>
            <person name="Gerke L.C."/>
            <person name="Carroll A.S."/>
            <person name="Howson R.W."/>
            <person name="Weissman J.S."/>
            <person name="O'Shea E.K."/>
        </authorList>
    </citation>
    <scope>SUBCELLULAR LOCATION [LARGE SCALE ANALYSIS]</scope>
</reference>
<reference key="8">
    <citation type="journal article" date="2003" name="Nature">
        <title>Global analysis of protein expression in yeast.</title>
        <authorList>
            <person name="Ghaemmaghami S."/>
            <person name="Huh W.-K."/>
            <person name="Bower K."/>
            <person name="Howson R.W."/>
            <person name="Belle A."/>
            <person name="Dephoure N."/>
            <person name="O'Shea E.K."/>
            <person name="Weissman J.S."/>
        </authorList>
    </citation>
    <scope>LEVEL OF PROTEIN EXPRESSION [LARGE SCALE ANALYSIS]</scope>
</reference>
<proteinExistence type="evidence at protein level"/>
<comment type="function">
    <text evidence="2 5">Involved in the metabolism of ADP-ribose 1',2'-cyclic phosphate which is produced as a consequence of tRNA splicing.</text>
</comment>
<comment type="catalytic activity">
    <reaction evidence="2 5">
        <text>ADP-alpha-D-ribose 1'',2''-cyclic phosphate + H2O = ADP-alpha-D-ribose 1''-phosphate + H(+)</text>
        <dbReference type="Rhea" id="RHEA:72083"/>
        <dbReference type="ChEBI" id="CHEBI:15377"/>
        <dbReference type="ChEBI" id="CHEBI:15378"/>
        <dbReference type="ChEBI" id="CHEBI:58753"/>
        <dbReference type="ChEBI" id="CHEBI:76596"/>
    </reaction>
    <physiologicalReaction direction="left-to-right" evidence="2 5">
        <dbReference type="Rhea" id="RHEA:72084"/>
    </physiologicalReaction>
</comment>
<comment type="catalytic activity">
    <reaction evidence="2 5">
        <text>2',3'-cyclophospho-AMP + H2O = adenosine 2'-phosphate + H(+)</text>
        <dbReference type="Rhea" id="RHEA:37191"/>
        <dbReference type="ChEBI" id="CHEBI:15377"/>
        <dbReference type="ChEBI" id="CHEBI:15378"/>
        <dbReference type="ChEBI" id="CHEBI:60879"/>
        <dbReference type="ChEBI" id="CHEBI:77740"/>
        <dbReference type="EC" id="3.1.4.37"/>
    </reaction>
    <physiologicalReaction direction="left-to-right" evidence="2 5">
        <dbReference type="Rhea" id="RHEA:37192"/>
    </physiologicalReaction>
</comment>
<comment type="catalytic activity">
    <reaction evidence="2 5">
        <text>2',3'-cyclophospho-GMP + H2O = guanosine 2'-phosphate + H(+)</text>
        <dbReference type="Rhea" id="RHEA:37211"/>
        <dbReference type="ChEBI" id="CHEBI:15377"/>
        <dbReference type="ChEBI" id="CHEBI:15378"/>
        <dbReference type="ChEBI" id="CHEBI:60837"/>
        <dbReference type="ChEBI" id="CHEBI:74604"/>
        <dbReference type="EC" id="3.1.4.37"/>
    </reaction>
    <physiologicalReaction direction="left-to-right" evidence="2 5">
        <dbReference type="Rhea" id="RHEA:37212"/>
    </physiologicalReaction>
</comment>
<comment type="catalytic activity">
    <reaction evidence="2 5">
        <text>2',3'-cyclophospho-UMP + H2O = uridine 2'-phosphate + H(+)</text>
        <dbReference type="Rhea" id="RHEA:37239"/>
        <dbReference type="ChEBI" id="CHEBI:15377"/>
        <dbReference type="ChEBI" id="CHEBI:15378"/>
        <dbReference type="ChEBI" id="CHEBI:60873"/>
        <dbReference type="ChEBI" id="CHEBI:77802"/>
        <dbReference type="EC" id="3.1.4.37"/>
    </reaction>
    <physiologicalReaction direction="left-to-right" evidence="2 5">
        <dbReference type="Rhea" id="RHEA:37240"/>
    </physiologicalReaction>
</comment>
<comment type="catalytic activity">
    <reaction evidence="2 5">
        <text>2',3'-cyclophospho-CMP + H2O = cytidine 2'-phosphate + H(+)</text>
        <dbReference type="Rhea" id="RHEA:41956"/>
        <dbReference type="ChEBI" id="CHEBI:15377"/>
        <dbReference type="ChEBI" id="CHEBI:15378"/>
        <dbReference type="ChEBI" id="CHEBI:60877"/>
        <dbReference type="ChEBI" id="CHEBI:77766"/>
        <dbReference type="EC" id="3.1.4.37"/>
    </reaction>
    <physiologicalReaction direction="left-to-right" evidence="2 5">
        <dbReference type="Rhea" id="RHEA:41957"/>
    </physiologicalReaction>
</comment>
<comment type="catalytic activity">
    <reaction evidence="2 5">
        <text>a nucleoside 2',3'-cyclic phosphate + H2O = a nucleoside 2'-phosphate + H(+)</text>
        <dbReference type="Rhea" id="RHEA:14489"/>
        <dbReference type="ChEBI" id="CHEBI:15377"/>
        <dbReference type="ChEBI" id="CHEBI:15378"/>
        <dbReference type="ChEBI" id="CHEBI:66954"/>
        <dbReference type="ChEBI" id="CHEBI:78552"/>
        <dbReference type="EC" id="3.1.4.37"/>
    </reaction>
    <physiologicalReaction direction="left-to-right" evidence="2 5">
        <dbReference type="Rhea" id="RHEA:14490"/>
    </physiologicalReaction>
</comment>
<comment type="biophysicochemical properties">
    <kinetics>
        <KM evidence="2 5">4.97 mM for adenosine 1',2'-cyclic phosphate</KM>
        <KM evidence="2 5">14.29 mM for guanosine 1',2'-cyclic phosphate</KM>
        <KM evidence="2 5">12.18 mM for cytidine 1',2'-cyclic phosphate</KM>
        <KM evidence="2 5">8.91 mM for uridine 1',2'-cyclic phosphate</KM>
        <KM evidence="2 5">0.37 mM for ADP-ribose 1',2'-cyclic phosphate</KM>
        <KM evidence="2 5">0.33 mM for ribose 1,3-cyclic phosphate</KM>
        <Vmax evidence="2 5">353.0 umol/min/mg enzyme toward adenosine 1',2'-cyclic phosphate</Vmax>
        <Vmax evidence="2 5">390.0 umol/min/mg enzyme toward guanosine 1',2'-cyclic phosphate</Vmax>
        <Vmax evidence="2 5">598.0 umol/min/mg enzyme toward cytidine 1',2'-cyclic phosphate</Vmax>
        <Vmax evidence="2 5">296.0 umol/min/mg enzyme toward uridine 1',2'-cyclic phosphate</Vmax>
        <Vmax evidence="2 5">61.0 umol/min/mg enzyme toward ADP-ribose 1',2'-cyclic phosphate</Vmax>
        <Vmax evidence="2 5">0.02 umol/min/mg enzyme toward ribose 1,3-cyclic phosphate</Vmax>
    </kinetics>
</comment>
<comment type="subcellular location">
    <subcellularLocation>
        <location evidence="3">Golgi apparatus</location>
    </subcellularLocation>
</comment>
<comment type="miscellaneous">
    <text evidence="4">Present with 1520 molecules/cell in log phase SD medium.</text>
</comment>
<comment type="similarity">
    <text evidence="7">Belongs to the 2H phosphoesterase superfamily. CPD1 family.</text>
</comment>
<organism>
    <name type="scientific">Saccharomyces cerevisiae (strain ATCC 204508 / S288c)</name>
    <name type="common">Baker's yeast</name>
    <dbReference type="NCBI Taxonomy" id="559292"/>
    <lineage>
        <taxon>Eukaryota</taxon>
        <taxon>Fungi</taxon>
        <taxon>Dikarya</taxon>
        <taxon>Ascomycota</taxon>
        <taxon>Saccharomycotina</taxon>
        <taxon>Saccharomycetes</taxon>
        <taxon>Saccharomycetales</taxon>
        <taxon>Saccharomycetaceae</taxon>
        <taxon>Saccharomyces</taxon>
    </lineage>
</organism>
<accession>P53314</accession>
<accession>D6VV27</accession>
<evidence type="ECO:0000250" key="1">
    <source>
        <dbReference type="UniProtKB" id="P16330"/>
    </source>
</evidence>
<evidence type="ECO:0000269" key="2">
    <source>
    </source>
</evidence>
<evidence type="ECO:0000269" key="3">
    <source>
    </source>
</evidence>
<evidence type="ECO:0000269" key="4">
    <source>
    </source>
</evidence>
<evidence type="ECO:0000269" key="5">
    <source>
    </source>
</evidence>
<evidence type="ECO:0000303" key="6">
    <source>
    </source>
</evidence>
<evidence type="ECO:0000305" key="7"/>
<gene>
    <name evidence="6" type="primary">CPD1</name>
    <name type="ordered locus">YGR247W</name>
</gene>
<dbReference type="EC" id="3.1.4.37" evidence="2 5"/>
<dbReference type="EMBL" id="Y07703">
    <property type="protein sequence ID" value="CAA68969.1"/>
    <property type="molecule type" value="Genomic_DNA"/>
</dbReference>
<dbReference type="EMBL" id="Z73032">
    <property type="protein sequence ID" value="CAA97276.1"/>
    <property type="molecule type" value="Genomic_DNA"/>
</dbReference>
<dbReference type="EMBL" id="AY558381">
    <property type="protein sequence ID" value="AAS56707.1"/>
    <property type="molecule type" value="Genomic_DNA"/>
</dbReference>
<dbReference type="EMBL" id="BK006941">
    <property type="protein sequence ID" value="DAA08338.1"/>
    <property type="molecule type" value="Genomic_DNA"/>
</dbReference>
<dbReference type="PIR" id="S64573">
    <property type="entry name" value="S64573"/>
</dbReference>
<dbReference type="RefSeq" id="NP_011763.1">
    <property type="nucleotide sequence ID" value="NM_001181376.1"/>
</dbReference>
<dbReference type="SMR" id="P53314"/>
<dbReference type="BioGRID" id="33498">
    <property type="interactions" value="52"/>
</dbReference>
<dbReference type="DIP" id="DIP-5558N"/>
<dbReference type="FunCoup" id="P53314">
    <property type="interactions" value="25"/>
</dbReference>
<dbReference type="IntAct" id="P53314">
    <property type="interactions" value="1"/>
</dbReference>
<dbReference type="STRING" id="4932.YGR247W"/>
<dbReference type="iPTMnet" id="P53314"/>
<dbReference type="PaxDb" id="4932-YGR247W"/>
<dbReference type="PeptideAtlas" id="P53314"/>
<dbReference type="TopDownProteomics" id="P53314"/>
<dbReference type="EnsemblFungi" id="YGR247W_mRNA">
    <property type="protein sequence ID" value="YGR247W"/>
    <property type="gene ID" value="YGR247W"/>
</dbReference>
<dbReference type="GeneID" id="853162"/>
<dbReference type="KEGG" id="sce:YGR247W"/>
<dbReference type="AGR" id="SGD:S000003479"/>
<dbReference type="SGD" id="S000003479">
    <property type="gene designation" value="CPD1"/>
</dbReference>
<dbReference type="VEuPathDB" id="FungiDB:YGR247W"/>
<dbReference type="eggNOG" id="ENOG502RY6J">
    <property type="taxonomic scope" value="Eukaryota"/>
</dbReference>
<dbReference type="HOGENOM" id="CLU_088289_0_0_1"/>
<dbReference type="InParanoid" id="P53314"/>
<dbReference type="OMA" id="FEPHITI"/>
<dbReference type="OrthoDB" id="514292at2759"/>
<dbReference type="BioCyc" id="MetaCyc:YGR247W-MONOMER"/>
<dbReference type="BioCyc" id="YEAST:YGR247W-MONOMER"/>
<dbReference type="SABIO-RK" id="P53314"/>
<dbReference type="BioGRID-ORCS" id="853162">
    <property type="hits" value="4 hits in 10 CRISPR screens"/>
</dbReference>
<dbReference type="PRO" id="PR:P53314"/>
<dbReference type="Proteomes" id="UP000002311">
    <property type="component" value="Chromosome VII"/>
</dbReference>
<dbReference type="RNAct" id="P53314">
    <property type="molecule type" value="protein"/>
</dbReference>
<dbReference type="GO" id="GO:0030136">
    <property type="term" value="C:clathrin-coated vesicle"/>
    <property type="evidence" value="ECO:0007005"/>
    <property type="project" value="SGD"/>
</dbReference>
<dbReference type="GO" id="GO:0005794">
    <property type="term" value="C:Golgi apparatus"/>
    <property type="evidence" value="ECO:0007669"/>
    <property type="project" value="UniProtKB-SubCell"/>
</dbReference>
<dbReference type="GO" id="GO:0004113">
    <property type="term" value="F:2',3'-cyclic-nucleotide 3'-phosphodiesterase activity"/>
    <property type="evidence" value="ECO:0000314"/>
    <property type="project" value="SGD"/>
</dbReference>
<dbReference type="GO" id="GO:0009187">
    <property type="term" value="P:cyclic nucleotide metabolic process"/>
    <property type="evidence" value="ECO:0000314"/>
    <property type="project" value="SGD"/>
</dbReference>
<dbReference type="FunFam" id="3.90.1140.10:FF:000021">
    <property type="entry name" value="AaceriAEL214Cp"/>
    <property type="match status" value="1"/>
</dbReference>
<dbReference type="Gene3D" id="3.90.1140.10">
    <property type="entry name" value="Cyclic phosphodiesterase"/>
    <property type="match status" value="1"/>
</dbReference>
<dbReference type="InterPro" id="IPR012386">
    <property type="entry name" value="Cyclic-nucl_3Pdiesterase"/>
</dbReference>
<dbReference type="InterPro" id="IPR009097">
    <property type="entry name" value="Cyclic_Pdiesterase"/>
</dbReference>
<dbReference type="PANTHER" id="PTHR28141">
    <property type="entry name" value="2',3'-CYCLIC-NUCLEOTIDE 3'-PHOSPHODIESTERASE"/>
    <property type="match status" value="1"/>
</dbReference>
<dbReference type="PANTHER" id="PTHR28141:SF1">
    <property type="entry name" value="2',3'-CYCLIC-NUCLEOTIDE 3'-PHOSPHODIESTERASE"/>
    <property type="match status" value="1"/>
</dbReference>
<dbReference type="Pfam" id="PF07823">
    <property type="entry name" value="CPDase"/>
    <property type="match status" value="1"/>
</dbReference>
<dbReference type="SUPFAM" id="SSF55144">
    <property type="entry name" value="LigT-like"/>
    <property type="match status" value="1"/>
</dbReference>
<name>CPD1_YEAST</name>
<protein>
    <recommendedName>
        <fullName evidence="6">2',3'-cyclic-nucleotide 3'-phosphodiesterase</fullName>
        <shortName evidence="6">CPDase</shortName>
        <ecNumber evidence="2 5">3.1.4.37</ecNumber>
    </recommendedName>
</protein>
<sequence length="239" mass="26732">MAIALWYCPPQGSVAYETLQMLIFSFQTLFPDSPVFEPHVTVTSHLVCNSKDDVNKILTSCVAAIQSIRSHQTAKKGRKGQVSHAVAAPLVSFNGCSVGKQYFKKIVLECNKNKILYGVAQVMREMYVEIDPETRSSRAATWVHEEFHPHVSLLYSDIHPVSQASLRVVQQRIEDALDVQLVPREKRKGSGNADGSNEVQMRWDFDVSSSLSWNIPGTFKVVNCVGPVQEWEVLGRVDV</sequence>